<reference key="1">
    <citation type="journal article" date="2008" name="J. Bacteriol.">
        <title>Genome sequence of Lactobacillus helveticus: an organism distinguished by selective gene loss and IS element expansion.</title>
        <authorList>
            <person name="Callanan M."/>
            <person name="Kaleta P."/>
            <person name="O'Callaghan J."/>
            <person name="O'Sullivan O."/>
            <person name="Jordan K."/>
            <person name="McAuliffe O."/>
            <person name="Sangrador-Vegas A."/>
            <person name="Slattery L."/>
            <person name="Fitzgerald G.F."/>
            <person name="Beresford T."/>
            <person name="Ross R.P."/>
        </authorList>
    </citation>
    <scope>NUCLEOTIDE SEQUENCE [LARGE SCALE GENOMIC DNA]</scope>
    <source>
        <strain>DPC 4571</strain>
    </source>
</reference>
<dbReference type="EC" id="2.7.7.72" evidence="1"/>
<dbReference type="EMBL" id="CP000517">
    <property type="protein sequence ID" value="ABX27127.1"/>
    <property type="molecule type" value="Genomic_DNA"/>
</dbReference>
<dbReference type="RefSeq" id="WP_012211821.1">
    <property type="nucleotide sequence ID" value="NC_010080.1"/>
</dbReference>
<dbReference type="SMR" id="A8YV39"/>
<dbReference type="KEGG" id="lhe:lhv_1066"/>
<dbReference type="eggNOG" id="COG0617">
    <property type="taxonomic scope" value="Bacteria"/>
</dbReference>
<dbReference type="HOGENOM" id="CLU_015961_3_1_9"/>
<dbReference type="Proteomes" id="UP000000790">
    <property type="component" value="Chromosome"/>
</dbReference>
<dbReference type="GO" id="GO:0005524">
    <property type="term" value="F:ATP binding"/>
    <property type="evidence" value="ECO:0007669"/>
    <property type="project" value="UniProtKB-UniRule"/>
</dbReference>
<dbReference type="GO" id="GO:0004810">
    <property type="term" value="F:CCA tRNA nucleotidyltransferase activity"/>
    <property type="evidence" value="ECO:0007669"/>
    <property type="project" value="UniProtKB-UniRule"/>
</dbReference>
<dbReference type="GO" id="GO:0000287">
    <property type="term" value="F:magnesium ion binding"/>
    <property type="evidence" value="ECO:0007669"/>
    <property type="project" value="UniProtKB-UniRule"/>
</dbReference>
<dbReference type="GO" id="GO:0000049">
    <property type="term" value="F:tRNA binding"/>
    <property type="evidence" value="ECO:0007669"/>
    <property type="project" value="UniProtKB-UniRule"/>
</dbReference>
<dbReference type="GO" id="GO:0042245">
    <property type="term" value="P:RNA repair"/>
    <property type="evidence" value="ECO:0007669"/>
    <property type="project" value="UniProtKB-KW"/>
</dbReference>
<dbReference type="GO" id="GO:0001680">
    <property type="term" value="P:tRNA 3'-terminal CCA addition"/>
    <property type="evidence" value="ECO:0007669"/>
    <property type="project" value="UniProtKB-UniRule"/>
</dbReference>
<dbReference type="CDD" id="cd05398">
    <property type="entry name" value="NT_ClassII-CCAase"/>
    <property type="match status" value="1"/>
</dbReference>
<dbReference type="Gene3D" id="1.10.110.30">
    <property type="match status" value="1"/>
</dbReference>
<dbReference type="Gene3D" id="1.10.246.80">
    <property type="match status" value="1"/>
</dbReference>
<dbReference type="Gene3D" id="1.20.58.560">
    <property type="match status" value="1"/>
</dbReference>
<dbReference type="Gene3D" id="3.30.460.10">
    <property type="entry name" value="Beta Polymerase, domain 2"/>
    <property type="match status" value="1"/>
</dbReference>
<dbReference type="HAMAP" id="MF_01263">
    <property type="entry name" value="CCA_bact_type3"/>
    <property type="match status" value="1"/>
</dbReference>
<dbReference type="InterPro" id="IPR050264">
    <property type="entry name" value="Bact_CCA-adding_enz_type3_sf"/>
</dbReference>
<dbReference type="InterPro" id="IPR032810">
    <property type="entry name" value="CCA-adding_enz_C"/>
</dbReference>
<dbReference type="InterPro" id="IPR023068">
    <property type="entry name" value="CCA-adding_enz_firmicutes"/>
</dbReference>
<dbReference type="InterPro" id="IPR043519">
    <property type="entry name" value="NT_sf"/>
</dbReference>
<dbReference type="InterPro" id="IPR002646">
    <property type="entry name" value="PolA_pol_head_dom"/>
</dbReference>
<dbReference type="InterPro" id="IPR032828">
    <property type="entry name" value="PolyA_RNA-bd"/>
</dbReference>
<dbReference type="NCBIfam" id="NF009814">
    <property type="entry name" value="PRK13299.1"/>
    <property type="match status" value="1"/>
</dbReference>
<dbReference type="PANTHER" id="PTHR46173">
    <property type="entry name" value="CCA TRNA NUCLEOTIDYLTRANSFERASE 1, MITOCHONDRIAL"/>
    <property type="match status" value="1"/>
</dbReference>
<dbReference type="PANTHER" id="PTHR46173:SF1">
    <property type="entry name" value="CCA TRNA NUCLEOTIDYLTRANSFERASE 1, MITOCHONDRIAL"/>
    <property type="match status" value="1"/>
</dbReference>
<dbReference type="Pfam" id="PF01743">
    <property type="entry name" value="PolyA_pol"/>
    <property type="match status" value="1"/>
</dbReference>
<dbReference type="Pfam" id="PF12627">
    <property type="entry name" value="PolyA_pol_RNAbd"/>
    <property type="match status" value="1"/>
</dbReference>
<dbReference type="Pfam" id="PF13735">
    <property type="entry name" value="tRNA_NucTran2_2"/>
    <property type="match status" value="1"/>
</dbReference>
<dbReference type="SUPFAM" id="SSF81301">
    <property type="entry name" value="Nucleotidyltransferase"/>
    <property type="match status" value="1"/>
</dbReference>
<dbReference type="SUPFAM" id="SSF81891">
    <property type="entry name" value="Poly A polymerase C-terminal region-like"/>
    <property type="match status" value="1"/>
</dbReference>
<comment type="function">
    <text evidence="1">Catalyzes the addition and repair of the essential 3'-terminal CCA sequence in tRNAs without using a nucleic acid template. Adds these three nucleotides in the order of C, C, and A to the tRNA nucleotide-73, using CTP and ATP as substrates and producing inorganic pyrophosphate. tRNA 3'-terminal CCA addition is required both for tRNA processing and repair. Also involved in tRNA surveillance by mediating tandem CCA addition to generate a CCACCA at the 3' terminus of unstable tRNAs. While stable tRNAs receive only 3'-terminal CCA, unstable tRNAs are marked with CCACCA and rapidly degraded.</text>
</comment>
<comment type="catalytic activity">
    <reaction evidence="1">
        <text>a tRNA precursor + 2 CTP + ATP = a tRNA with a 3' CCA end + 3 diphosphate</text>
        <dbReference type="Rhea" id="RHEA:14433"/>
        <dbReference type="Rhea" id="RHEA-COMP:10465"/>
        <dbReference type="Rhea" id="RHEA-COMP:10468"/>
        <dbReference type="ChEBI" id="CHEBI:30616"/>
        <dbReference type="ChEBI" id="CHEBI:33019"/>
        <dbReference type="ChEBI" id="CHEBI:37563"/>
        <dbReference type="ChEBI" id="CHEBI:74896"/>
        <dbReference type="ChEBI" id="CHEBI:83071"/>
        <dbReference type="EC" id="2.7.7.72"/>
    </reaction>
</comment>
<comment type="catalytic activity">
    <reaction evidence="1">
        <text>a tRNA with a 3' CCA end + 2 CTP + ATP = a tRNA with a 3' CCACCA end + 3 diphosphate</text>
        <dbReference type="Rhea" id="RHEA:76235"/>
        <dbReference type="Rhea" id="RHEA-COMP:10468"/>
        <dbReference type="Rhea" id="RHEA-COMP:18655"/>
        <dbReference type="ChEBI" id="CHEBI:30616"/>
        <dbReference type="ChEBI" id="CHEBI:33019"/>
        <dbReference type="ChEBI" id="CHEBI:37563"/>
        <dbReference type="ChEBI" id="CHEBI:83071"/>
        <dbReference type="ChEBI" id="CHEBI:195187"/>
    </reaction>
    <physiologicalReaction direction="left-to-right" evidence="1">
        <dbReference type="Rhea" id="RHEA:76236"/>
    </physiologicalReaction>
</comment>
<comment type="cofactor">
    <cofactor evidence="1">
        <name>Mg(2+)</name>
        <dbReference type="ChEBI" id="CHEBI:18420"/>
    </cofactor>
</comment>
<comment type="subunit">
    <text evidence="1">Homodimer.</text>
</comment>
<comment type="miscellaneous">
    <text evidence="1">A single active site specifically recognizes both ATP and CTP and is responsible for their addition.</text>
</comment>
<comment type="similarity">
    <text evidence="1">Belongs to the tRNA nucleotidyltransferase/poly(A) polymerase family. Bacterial CCA-adding enzyme type 3 subfamily.</text>
</comment>
<name>CCA_LACH4</name>
<protein>
    <recommendedName>
        <fullName evidence="1">CCA-adding enzyme</fullName>
        <ecNumber evidence="1">2.7.7.72</ecNumber>
    </recommendedName>
    <alternativeName>
        <fullName evidence="1">CCA tRNA nucleotidyltransferase</fullName>
    </alternativeName>
    <alternativeName>
        <fullName evidence="1">tRNA CCA-pyrophosphorylase</fullName>
    </alternativeName>
    <alternativeName>
        <fullName evidence="1">tRNA adenylyl-/cytidylyl- transferase</fullName>
    </alternativeName>
    <alternativeName>
        <fullName evidence="1">tRNA nucleotidyltransferase</fullName>
    </alternativeName>
    <alternativeName>
        <fullName evidence="1">tRNA-NT</fullName>
    </alternativeName>
</protein>
<organism>
    <name type="scientific">Lactobacillus helveticus (strain DPC 4571)</name>
    <dbReference type="NCBI Taxonomy" id="405566"/>
    <lineage>
        <taxon>Bacteria</taxon>
        <taxon>Bacillati</taxon>
        <taxon>Bacillota</taxon>
        <taxon>Bacilli</taxon>
        <taxon>Lactobacillales</taxon>
        <taxon>Lactobacillaceae</taxon>
        <taxon>Lactobacillus</taxon>
    </lineage>
</organism>
<accession>A8YV39</accession>
<sequence length="399" mass="45809">MIKVDKLPDVFIKAMPVLQTLEDAGFEAYFVGGSVRDLLLDRHVHDVDITTSAYPEEVKELFAKSIDTGIRHGTVTVLYGGESYEITTFRTESGYQDYRRPDHVTFVQNLDEDLKRRDFTINALAMDLHGQIVDLFNGVEDLKNHIIRAVGDPEKRFHEDALRMMRAVRFTSQLKFNLEEKTEQAIKDNHELLKKISVERIREEFVKMGIGPHSRQAFQIFLDTQLSEDVPDFAGKKELLQIYPQLQFSPTLETSLWSLIIILLKLPDEDISKFMRDWKNSNAMTEQVERIIKFFDLISDHTPNDYELFQAGERTIINTIDVAHILGQPVASEALVDRYLALPIKKPAELAIDGRFLIKHGMRPGAELGHTLNKIRELVVSSRLENSPDAIEKYLEDLD</sequence>
<keyword id="KW-0067">ATP-binding</keyword>
<keyword id="KW-0460">Magnesium</keyword>
<keyword id="KW-0479">Metal-binding</keyword>
<keyword id="KW-0547">Nucleotide-binding</keyword>
<keyword id="KW-0548">Nucleotidyltransferase</keyword>
<keyword id="KW-0692">RNA repair</keyword>
<keyword id="KW-0694">RNA-binding</keyword>
<keyword id="KW-0808">Transferase</keyword>
<keyword id="KW-0819">tRNA processing</keyword>
<gene>
    <name evidence="1" type="primary">cca</name>
    <name type="ordered locus">lhv_1066</name>
</gene>
<proteinExistence type="inferred from homology"/>
<feature type="chain" id="PRO_1000073181" description="CCA-adding enzyme">
    <location>
        <begin position="1"/>
        <end position="399"/>
    </location>
</feature>
<feature type="binding site" evidence="1">
    <location>
        <position position="33"/>
    </location>
    <ligand>
        <name>ATP</name>
        <dbReference type="ChEBI" id="CHEBI:30616"/>
    </ligand>
</feature>
<feature type="binding site" evidence="1">
    <location>
        <position position="33"/>
    </location>
    <ligand>
        <name>CTP</name>
        <dbReference type="ChEBI" id="CHEBI:37563"/>
    </ligand>
</feature>
<feature type="binding site" evidence="1">
    <location>
        <position position="36"/>
    </location>
    <ligand>
        <name>ATP</name>
        <dbReference type="ChEBI" id="CHEBI:30616"/>
    </ligand>
</feature>
<feature type="binding site" evidence="1">
    <location>
        <position position="36"/>
    </location>
    <ligand>
        <name>CTP</name>
        <dbReference type="ChEBI" id="CHEBI:37563"/>
    </ligand>
</feature>
<feature type="binding site" evidence="1">
    <location>
        <position position="46"/>
    </location>
    <ligand>
        <name>Mg(2+)</name>
        <dbReference type="ChEBI" id="CHEBI:18420"/>
    </ligand>
</feature>
<feature type="binding site" evidence="1">
    <location>
        <position position="48"/>
    </location>
    <ligand>
        <name>Mg(2+)</name>
        <dbReference type="ChEBI" id="CHEBI:18420"/>
    </ligand>
</feature>
<feature type="binding site" evidence="1">
    <location>
        <position position="117"/>
    </location>
    <ligand>
        <name>ATP</name>
        <dbReference type="ChEBI" id="CHEBI:30616"/>
    </ligand>
</feature>
<feature type="binding site" evidence="1">
    <location>
        <position position="117"/>
    </location>
    <ligand>
        <name>CTP</name>
        <dbReference type="ChEBI" id="CHEBI:37563"/>
    </ligand>
</feature>
<feature type="binding site" evidence="1">
    <location>
        <position position="160"/>
    </location>
    <ligand>
        <name>ATP</name>
        <dbReference type="ChEBI" id="CHEBI:30616"/>
    </ligand>
</feature>
<feature type="binding site" evidence="1">
    <location>
        <position position="160"/>
    </location>
    <ligand>
        <name>CTP</name>
        <dbReference type="ChEBI" id="CHEBI:37563"/>
    </ligand>
</feature>
<feature type="binding site" evidence="1">
    <location>
        <position position="163"/>
    </location>
    <ligand>
        <name>ATP</name>
        <dbReference type="ChEBI" id="CHEBI:30616"/>
    </ligand>
</feature>
<feature type="binding site" evidence="1">
    <location>
        <position position="163"/>
    </location>
    <ligand>
        <name>CTP</name>
        <dbReference type="ChEBI" id="CHEBI:37563"/>
    </ligand>
</feature>
<feature type="binding site" evidence="1">
    <location>
        <position position="166"/>
    </location>
    <ligand>
        <name>ATP</name>
        <dbReference type="ChEBI" id="CHEBI:30616"/>
    </ligand>
</feature>
<feature type="binding site" evidence="1">
    <location>
        <position position="166"/>
    </location>
    <ligand>
        <name>CTP</name>
        <dbReference type="ChEBI" id="CHEBI:37563"/>
    </ligand>
</feature>
<feature type="binding site" evidence="1">
    <location>
        <position position="169"/>
    </location>
    <ligand>
        <name>ATP</name>
        <dbReference type="ChEBI" id="CHEBI:30616"/>
    </ligand>
</feature>
<feature type="binding site" evidence="1">
    <location>
        <position position="169"/>
    </location>
    <ligand>
        <name>CTP</name>
        <dbReference type="ChEBI" id="CHEBI:37563"/>
    </ligand>
</feature>
<evidence type="ECO:0000255" key="1">
    <source>
        <dbReference type="HAMAP-Rule" id="MF_01263"/>
    </source>
</evidence>